<organism>
    <name type="scientific">Ruegeria sp. (strain TM1040)</name>
    <name type="common">Silicibacter sp.</name>
    <dbReference type="NCBI Taxonomy" id="292414"/>
    <lineage>
        <taxon>Bacteria</taxon>
        <taxon>Pseudomonadati</taxon>
        <taxon>Pseudomonadota</taxon>
        <taxon>Alphaproteobacteria</taxon>
        <taxon>Rhodobacterales</taxon>
        <taxon>Roseobacteraceae</taxon>
        <taxon>Ruegeria</taxon>
    </lineage>
</organism>
<comment type="function">
    <text evidence="1">Involved in mRNA degradation. Catalyzes the phosphorolysis of single-stranded polyribonucleotides processively in the 3'- to 5'-direction.</text>
</comment>
<comment type="catalytic activity">
    <reaction evidence="1">
        <text>RNA(n+1) + phosphate = RNA(n) + a ribonucleoside 5'-diphosphate</text>
        <dbReference type="Rhea" id="RHEA:22096"/>
        <dbReference type="Rhea" id="RHEA-COMP:14527"/>
        <dbReference type="Rhea" id="RHEA-COMP:17342"/>
        <dbReference type="ChEBI" id="CHEBI:43474"/>
        <dbReference type="ChEBI" id="CHEBI:57930"/>
        <dbReference type="ChEBI" id="CHEBI:140395"/>
        <dbReference type="EC" id="2.7.7.8"/>
    </reaction>
</comment>
<comment type="cofactor">
    <cofactor evidence="1">
        <name>Mg(2+)</name>
        <dbReference type="ChEBI" id="CHEBI:18420"/>
    </cofactor>
</comment>
<comment type="subcellular location">
    <subcellularLocation>
        <location evidence="1">Cytoplasm</location>
    </subcellularLocation>
</comment>
<comment type="similarity">
    <text evidence="1">Belongs to the polyribonucleotide nucleotidyltransferase family.</text>
</comment>
<evidence type="ECO:0000255" key="1">
    <source>
        <dbReference type="HAMAP-Rule" id="MF_01595"/>
    </source>
</evidence>
<dbReference type="EC" id="2.7.7.8" evidence="1"/>
<dbReference type="EMBL" id="CP000377">
    <property type="protein sequence ID" value="ABF62811.1"/>
    <property type="molecule type" value="Genomic_DNA"/>
</dbReference>
<dbReference type="RefSeq" id="WP_011537449.1">
    <property type="nucleotide sequence ID" value="NC_008044.1"/>
</dbReference>
<dbReference type="SMR" id="Q1GKK5"/>
<dbReference type="STRING" id="292414.TM1040_0078"/>
<dbReference type="KEGG" id="sit:TM1040_0078"/>
<dbReference type="eggNOG" id="COG1185">
    <property type="taxonomic scope" value="Bacteria"/>
</dbReference>
<dbReference type="HOGENOM" id="CLU_004217_2_2_5"/>
<dbReference type="OrthoDB" id="9804305at2"/>
<dbReference type="Proteomes" id="UP000000636">
    <property type="component" value="Chromosome"/>
</dbReference>
<dbReference type="GO" id="GO:0005829">
    <property type="term" value="C:cytosol"/>
    <property type="evidence" value="ECO:0007669"/>
    <property type="project" value="TreeGrafter"/>
</dbReference>
<dbReference type="GO" id="GO:0000175">
    <property type="term" value="F:3'-5'-RNA exonuclease activity"/>
    <property type="evidence" value="ECO:0007669"/>
    <property type="project" value="TreeGrafter"/>
</dbReference>
<dbReference type="GO" id="GO:0000287">
    <property type="term" value="F:magnesium ion binding"/>
    <property type="evidence" value="ECO:0007669"/>
    <property type="project" value="UniProtKB-UniRule"/>
</dbReference>
<dbReference type="GO" id="GO:0004654">
    <property type="term" value="F:polyribonucleotide nucleotidyltransferase activity"/>
    <property type="evidence" value="ECO:0007669"/>
    <property type="project" value="UniProtKB-UniRule"/>
</dbReference>
<dbReference type="GO" id="GO:0003723">
    <property type="term" value="F:RNA binding"/>
    <property type="evidence" value="ECO:0007669"/>
    <property type="project" value="UniProtKB-UniRule"/>
</dbReference>
<dbReference type="GO" id="GO:0006402">
    <property type="term" value="P:mRNA catabolic process"/>
    <property type="evidence" value="ECO:0007669"/>
    <property type="project" value="UniProtKB-UniRule"/>
</dbReference>
<dbReference type="GO" id="GO:0006396">
    <property type="term" value="P:RNA processing"/>
    <property type="evidence" value="ECO:0007669"/>
    <property type="project" value="InterPro"/>
</dbReference>
<dbReference type="CDD" id="cd02393">
    <property type="entry name" value="KH-I_PNPase"/>
    <property type="match status" value="1"/>
</dbReference>
<dbReference type="CDD" id="cd11363">
    <property type="entry name" value="RNase_PH_PNPase_1"/>
    <property type="match status" value="1"/>
</dbReference>
<dbReference type="CDD" id="cd11364">
    <property type="entry name" value="RNase_PH_PNPase_2"/>
    <property type="match status" value="1"/>
</dbReference>
<dbReference type="CDD" id="cd04472">
    <property type="entry name" value="S1_PNPase"/>
    <property type="match status" value="1"/>
</dbReference>
<dbReference type="FunFam" id="2.40.50.140:FF:000107">
    <property type="entry name" value="Polyribonucleotide nucleotidyltransferase"/>
    <property type="match status" value="1"/>
</dbReference>
<dbReference type="FunFam" id="3.30.1370.10:FF:000001">
    <property type="entry name" value="Polyribonucleotide nucleotidyltransferase"/>
    <property type="match status" value="1"/>
</dbReference>
<dbReference type="FunFam" id="3.30.230.70:FF:000001">
    <property type="entry name" value="Polyribonucleotide nucleotidyltransferase"/>
    <property type="match status" value="1"/>
</dbReference>
<dbReference type="FunFam" id="3.30.230.70:FF:000002">
    <property type="entry name" value="Polyribonucleotide nucleotidyltransferase"/>
    <property type="match status" value="1"/>
</dbReference>
<dbReference type="Gene3D" id="3.30.230.70">
    <property type="entry name" value="GHMP Kinase, N-terminal domain"/>
    <property type="match status" value="2"/>
</dbReference>
<dbReference type="Gene3D" id="3.30.1370.10">
    <property type="entry name" value="K Homology domain, type 1"/>
    <property type="match status" value="1"/>
</dbReference>
<dbReference type="Gene3D" id="2.40.50.140">
    <property type="entry name" value="Nucleic acid-binding proteins"/>
    <property type="match status" value="1"/>
</dbReference>
<dbReference type="HAMAP" id="MF_01595">
    <property type="entry name" value="PNPase"/>
    <property type="match status" value="1"/>
</dbReference>
<dbReference type="InterPro" id="IPR001247">
    <property type="entry name" value="ExoRNase_PH_dom1"/>
</dbReference>
<dbReference type="InterPro" id="IPR015847">
    <property type="entry name" value="ExoRNase_PH_dom2"/>
</dbReference>
<dbReference type="InterPro" id="IPR036345">
    <property type="entry name" value="ExoRNase_PH_dom2_sf"/>
</dbReference>
<dbReference type="InterPro" id="IPR004087">
    <property type="entry name" value="KH_dom"/>
</dbReference>
<dbReference type="InterPro" id="IPR004088">
    <property type="entry name" value="KH_dom_type_1"/>
</dbReference>
<dbReference type="InterPro" id="IPR036612">
    <property type="entry name" value="KH_dom_type_1_sf"/>
</dbReference>
<dbReference type="InterPro" id="IPR012340">
    <property type="entry name" value="NA-bd_OB-fold"/>
</dbReference>
<dbReference type="InterPro" id="IPR012162">
    <property type="entry name" value="PNPase"/>
</dbReference>
<dbReference type="InterPro" id="IPR027408">
    <property type="entry name" value="PNPase/RNase_PH_dom_sf"/>
</dbReference>
<dbReference type="InterPro" id="IPR015848">
    <property type="entry name" value="PNPase_PH_RNA-bd_bac/org-type"/>
</dbReference>
<dbReference type="InterPro" id="IPR036456">
    <property type="entry name" value="PNPase_PH_RNA-bd_sf"/>
</dbReference>
<dbReference type="InterPro" id="IPR020568">
    <property type="entry name" value="Ribosomal_Su5_D2-typ_SF"/>
</dbReference>
<dbReference type="InterPro" id="IPR003029">
    <property type="entry name" value="S1_domain"/>
</dbReference>
<dbReference type="NCBIfam" id="TIGR03591">
    <property type="entry name" value="polynuc_phos"/>
    <property type="match status" value="1"/>
</dbReference>
<dbReference type="NCBIfam" id="NF008805">
    <property type="entry name" value="PRK11824.1"/>
    <property type="match status" value="1"/>
</dbReference>
<dbReference type="PANTHER" id="PTHR11252">
    <property type="entry name" value="POLYRIBONUCLEOTIDE NUCLEOTIDYLTRANSFERASE"/>
    <property type="match status" value="1"/>
</dbReference>
<dbReference type="PANTHER" id="PTHR11252:SF0">
    <property type="entry name" value="POLYRIBONUCLEOTIDE NUCLEOTIDYLTRANSFERASE 1, MITOCHONDRIAL"/>
    <property type="match status" value="1"/>
</dbReference>
<dbReference type="Pfam" id="PF00013">
    <property type="entry name" value="KH_1"/>
    <property type="match status" value="1"/>
</dbReference>
<dbReference type="Pfam" id="PF03726">
    <property type="entry name" value="PNPase"/>
    <property type="match status" value="1"/>
</dbReference>
<dbReference type="Pfam" id="PF01138">
    <property type="entry name" value="RNase_PH"/>
    <property type="match status" value="2"/>
</dbReference>
<dbReference type="Pfam" id="PF03725">
    <property type="entry name" value="RNase_PH_C"/>
    <property type="match status" value="2"/>
</dbReference>
<dbReference type="Pfam" id="PF00575">
    <property type="entry name" value="S1"/>
    <property type="match status" value="1"/>
</dbReference>
<dbReference type="PIRSF" id="PIRSF005499">
    <property type="entry name" value="PNPase"/>
    <property type="match status" value="1"/>
</dbReference>
<dbReference type="SMART" id="SM00322">
    <property type="entry name" value="KH"/>
    <property type="match status" value="1"/>
</dbReference>
<dbReference type="SMART" id="SM00316">
    <property type="entry name" value="S1"/>
    <property type="match status" value="1"/>
</dbReference>
<dbReference type="SUPFAM" id="SSF54791">
    <property type="entry name" value="Eukaryotic type KH-domain (KH-domain type I)"/>
    <property type="match status" value="1"/>
</dbReference>
<dbReference type="SUPFAM" id="SSF50249">
    <property type="entry name" value="Nucleic acid-binding proteins"/>
    <property type="match status" value="1"/>
</dbReference>
<dbReference type="SUPFAM" id="SSF46915">
    <property type="entry name" value="Polynucleotide phosphorylase/guanosine pentaphosphate synthase (PNPase/GPSI), domain 3"/>
    <property type="match status" value="1"/>
</dbReference>
<dbReference type="SUPFAM" id="SSF55666">
    <property type="entry name" value="Ribonuclease PH domain 2-like"/>
    <property type="match status" value="2"/>
</dbReference>
<dbReference type="SUPFAM" id="SSF54211">
    <property type="entry name" value="Ribosomal protein S5 domain 2-like"/>
    <property type="match status" value="2"/>
</dbReference>
<dbReference type="PROSITE" id="PS50084">
    <property type="entry name" value="KH_TYPE_1"/>
    <property type="match status" value="1"/>
</dbReference>
<dbReference type="PROSITE" id="PS50126">
    <property type="entry name" value="S1"/>
    <property type="match status" value="1"/>
</dbReference>
<keyword id="KW-0963">Cytoplasm</keyword>
<keyword id="KW-0460">Magnesium</keyword>
<keyword id="KW-0479">Metal-binding</keyword>
<keyword id="KW-0548">Nucleotidyltransferase</keyword>
<keyword id="KW-1185">Reference proteome</keyword>
<keyword id="KW-0694">RNA-binding</keyword>
<keyword id="KW-0808">Transferase</keyword>
<reference key="1">
    <citation type="submission" date="2006-05" db="EMBL/GenBank/DDBJ databases">
        <title>Complete sequence of chromosome of Silicibacter sp. TM1040.</title>
        <authorList>
            <consortium name="US DOE Joint Genome Institute"/>
            <person name="Copeland A."/>
            <person name="Lucas S."/>
            <person name="Lapidus A."/>
            <person name="Barry K."/>
            <person name="Detter J.C."/>
            <person name="Glavina del Rio T."/>
            <person name="Hammon N."/>
            <person name="Israni S."/>
            <person name="Dalin E."/>
            <person name="Tice H."/>
            <person name="Pitluck S."/>
            <person name="Brettin T."/>
            <person name="Bruce D."/>
            <person name="Han C."/>
            <person name="Tapia R."/>
            <person name="Goodwin L."/>
            <person name="Thompson L.S."/>
            <person name="Gilna P."/>
            <person name="Schmutz J."/>
            <person name="Larimer F."/>
            <person name="Land M."/>
            <person name="Hauser L."/>
            <person name="Kyrpides N."/>
            <person name="Kim E."/>
            <person name="Belas R."/>
            <person name="Moran M.A."/>
            <person name="Buchan A."/>
            <person name="Gonzalez J.M."/>
            <person name="Schell M.A."/>
            <person name="Sun F."/>
            <person name="Richardson P."/>
        </authorList>
    </citation>
    <scope>NUCLEOTIDE SEQUENCE [LARGE SCALE GENOMIC DNA]</scope>
    <source>
        <strain>TM1040</strain>
    </source>
</reference>
<gene>
    <name evidence="1" type="primary">pnp</name>
    <name type="ordered locus">TM1040_0078</name>
</gene>
<sequence>MFNVTTKTMQWGEETLTLETGKVARQADGTVIATLGETSVMANVTYAREQKPGQDFFPLTVHYQEKYYAAGKIPGGFFKREARPTEKETLTARLIDRPIRPLFVPGFKNEVLVMCTVLSHDLVNDPDIVAMIAASAALTISGVPFMGPIAGARVGYEDGEYILNPTVDDMQDLRLNPEQRLDLVVAGTKDAVMMVESEAYELTEEEMLGAVTFAHEQIQPVIDLIVSLAEETAKEPFDFTPPDYSDLYAAVKAAGEEKMRAAYAISDKQERVAAVGAAKEEIIASLTEEQQEDGNLGSALKKLESVVLRGDVVKNGRRIDGRALDQVRAIECQTGLLPRTHGSALFTRGETQGLVVTTLGTGDDEQFIDALHGNFKSNFLLHYNFPPYSVGEVGRVGSPGRREIGHGKLAWRALQAVLPAPTDFPYTIRVVSEITESNGSSSMASVCGGSLSMMDAGVPLKAPVAGVAMGLVLEEDGSYGILTDILGDEDHLGDMDFKVAGTEAGITSLQMDIKVAGITPEIMKNALAQAKAGRLHILGEMAKSLTEASEFSQHAPRIETMQVPTDKIREVIGSGGKVIREIVEVSGAKVDINDDGVIKIASANGEAIQKAYDMIHAIVAEPEEGAVYTGKVVKIVDFGAFVNFFGKRDGLVHVSQIENRRLNHPSDVLKEGQEVKVKLLGFDDRGKVRLSMKVVDQETGEEIVAEKKEAE</sequence>
<accession>Q1GKK5</accession>
<feature type="chain" id="PRO_0000329854" description="Polyribonucleotide nucleotidyltransferase">
    <location>
        <begin position="1"/>
        <end position="711"/>
    </location>
</feature>
<feature type="domain" description="KH" evidence="1">
    <location>
        <begin position="556"/>
        <end position="615"/>
    </location>
</feature>
<feature type="domain" description="S1 motif" evidence="1">
    <location>
        <begin position="625"/>
        <end position="693"/>
    </location>
</feature>
<feature type="binding site" evidence="1">
    <location>
        <position position="490"/>
    </location>
    <ligand>
        <name>Mg(2+)</name>
        <dbReference type="ChEBI" id="CHEBI:18420"/>
    </ligand>
</feature>
<feature type="binding site" evidence="1">
    <location>
        <position position="496"/>
    </location>
    <ligand>
        <name>Mg(2+)</name>
        <dbReference type="ChEBI" id="CHEBI:18420"/>
    </ligand>
</feature>
<proteinExistence type="inferred from homology"/>
<name>PNP_RUEST</name>
<protein>
    <recommendedName>
        <fullName evidence="1">Polyribonucleotide nucleotidyltransferase</fullName>
        <ecNumber evidence="1">2.7.7.8</ecNumber>
    </recommendedName>
    <alternativeName>
        <fullName evidence="1">Polynucleotide phosphorylase</fullName>
        <shortName evidence="1">PNPase</shortName>
    </alternativeName>
</protein>